<gene>
    <name type="primary">CYCS</name>
    <name type="synonym">CYC</name>
</gene>
<evidence type="ECO:0000250" key="1"/>
<evidence type="ECO:0000250" key="2">
    <source>
        <dbReference type="UniProtKB" id="P62894"/>
    </source>
</evidence>
<evidence type="ECO:0000250" key="3">
    <source>
        <dbReference type="UniProtKB" id="P62897"/>
    </source>
</evidence>
<evidence type="ECO:0000255" key="4">
    <source>
        <dbReference type="PROSITE-ProRule" id="PRU00433"/>
    </source>
</evidence>
<evidence type="ECO:0000269" key="5">
    <source>
    </source>
</evidence>
<evidence type="ECO:0000305" key="6"/>
<proteinExistence type="evidence at protein level"/>
<comment type="function">
    <text>Electron carrier protein. The oxidized form of the cytochrome c heme group can accept an electron from the heme group of the cytochrome c1 subunit of cytochrome reductase. Cytochrome c then transfers this electron to the cytochrome oxidase complex, the final protein carrier in the mitochondrial electron-transport chain.</text>
</comment>
<comment type="function">
    <text evidence="1">Plays a role in apoptosis. Suppression of the anti-apoptotic members or activation of the pro-apoptotic members of the Bcl-2 family leads to altered mitochondrial membrane permeability resulting in release of cytochrome c into the cytosol. Binding of cytochrome c to Apaf-1 triggers the activation of caspase-9, which then accelerates apoptosis by activating other caspases (By similarity).</text>
</comment>
<comment type="subcellular location">
    <subcellularLocation>
        <location>Mitochondrion intermembrane space</location>
    </subcellularLocation>
    <text>Loosely associated with the inner membrane.</text>
</comment>
<comment type="PTM">
    <text>Binds 1 heme c group covalently per subunit.</text>
</comment>
<comment type="PTM">
    <text evidence="1">Phosphorylation at Tyr-49 and Tyr-98 both reduce by half the turnover in the reaction with cytochrome c oxidase, down-regulating mitochondrial respiration.</text>
</comment>
<comment type="similarity">
    <text evidence="6">Belongs to the cytochrome c family.</text>
</comment>
<comment type="online information" name="Protein Spotlight">
    <link uri="https://www.proteinspotlight.org/back_issues/076"/>
    <text>Life shuttle - Issue 76 of November 2006</text>
</comment>
<sequence>MGDVEKGKKIFVQKCAQCHTVEKGGKHKTGPNLHGLFGRKTGQAVGFSYTDANKNKGITWGEDTLMEYLENPKKYIPGTKMIFAGIKKKDERADLIAYLKKATNE</sequence>
<protein>
    <recommendedName>
        <fullName>Cytochrome c</fullName>
    </recommendedName>
</protein>
<accession>P00008</accession>
<keyword id="KW-0007">Acetylation</keyword>
<keyword id="KW-0053">Apoptosis</keyword>
<keyword id="KW-0903">Direct protein sequencing</keyword>
<keyword id="KW-0249">Electron transport</keyword>
<keyword id="KW-0349">Heme</keyword>
<keyword id="KW-0408">Iron</keyword>
<keyword id="KW-0479">Metal-binding</keyword>
<keyword id="KW-0496">Mitochondrion</keyword>
<keyword id="KW-0597">Phosphoprotein</keyword>
<keyword id="KW-1185">Reference proteome</keyword>
<keyword id="KW-0679">Respiratory chain</keyword>
<keyword id="KW-0813">Transport</keyword>
<name>CYC_RABIT</name>
<feature type="initiator methionine" description="Removed" evidence="5">
    <location>
        <position position="1"/>
    </location>
</feature>
<feature type="chain" id="PRO_0000108230" description="Cytochrome c">
    <location>
        <begin position="2"/>
        <end position="105"/>
    </location>
</feature>
<feature type="binding site" description="covalent" evidence="4 5">
    <location>
        <position position="15"/>
    </location>
    <ligand>
        <name>heme c</name>
        <dbReference type="ChEBI" id="CHEBI:61717"/>
    </ligand>
</feature>
<feature type="binding site" description="covalent" evidence="4 5">
    <location>
        <position position="18"/>
    </location>
    <ligand>
        <name>heme c</name>
        <dbReference type="ChEBI" id="CHEBI:61717"/>
    </ligand>
</feature>
<feature type="binding site" description="axial binding residue">
    <location>
        <position position="19"/>
    </location>
    <ligand>
        <name>heme c</name>
        <dbReference type="ChEBI" id="CHEBI:61717"/>
    </ligand>
    <ligandPart>
        <name>Fe</name>
        <dbReference type="ChEBI" id="CHEBI:18248"/>
    </ligandPart>
</feature>
<feature type="binding site" description="axial binding residue">
    <location>
        <position position="81"/>
    </location>
    <ligand>
        <name>heme c</name>
        <dbReference type="ChEBI" id="CHEBI:61717"/>
    </ligand>
    <ligandPart>
        <name>Fe</name>
        <dbReference type="ChEBI" id="CHEBI:18248"/>
    </ligandPart>
</feature>
<feature type="modified residue" description="N-acetylglycine" evidence="5">
    <location>
        <position position="2"/>
    </location>
</feature>
<feature type="modified residue" description="Phosphotyrosine" evidence="2">
    <location>
        <position position="49"/>
    </location>
</feature>
<feature type="modified residue" description="N6-succinyllysine" evidence="3">
    <location>
        <position position="56"/>
    </location>
</feature>
<feature type="modified residue" description="N6-acetyllysine; alternate" evidence="3">
    <location>
        <position position="73"/>
    </location>
</feature>
<feature type="modified residue" description="N6-succinyllysine; alternate" evidence="3">
    <location>
        <position position="73"/>
    </location>
</feature>
<feature type="modified residue" description="Phosphotyrosine" evidence="2">
    <location>
        <position position="98"/>
    </location>
</feature>
<feature type="modified residue" description="N6-acetyllysine" evidence="3">
    <location>
        <position position="100"/>
    </location>
</feature>
<organism>
    <name type="scientific">Oryctolagus cuniculus</name>
    <name type="common">Rabbit</name>
    <dbReference type="NCBI Taxonomy" id="9986"/>
    <lineage>
        <taxon>Eukaryota</taxon>
        <taxon>Metazoa</taxon>
        <taxon>Chordata</taxon>
        <taxon>Craniata</taxon>
        <taxon>Vertebrata</taxon>
        <taxon>Euteleostomi</taxon>
        <taxon>Mammalia</taxon>
        <taxon>Eutheria</taxon>
        <taxon>Euarchontoglires</taxon>
        <taxon>Glires</taxon>
        <taxon>Lagomorpha</taxon>
        <taxon>Leporidae</taxon>
        <taxon>Oryctolagus</taxon>
    </lineage>
</organism>
<reference key="1">
    <citation type="journal article" date="1966" name="J. Biol. Chem.">
        <title>Rabbit heart cytochrome c.</title>
        <authorList>
            <person name="Needleman S.B."/>
            <person name="Margoliash E."/>
        </authorList>
    </citation>
    <scope>PROTEIN SEQUENCE OF 2-105</scope>
    <scope>ACETYLATION AT GLY-2</scope>
</reference>
<dbReference type="PIR" id="A00009">
    <property type="entry name" value="CCRB"/>
</dbReference>
<dbReference type="SMR" id="P00008"/>
<dbReference type="FunCoup" id="P00008">
    <property type="interactions" value="1481"/>
</dbReference>
<dbReference type="STRING" id="9986.ENSOCUP00000019281"/>
<dbReference type="iPTMnet" id="P00008"/>
<dbReference type="PaxDb" id="9986-ENSOCUP00000019281"/>
<dbReference type="eggNOG" id="KOG3453">
    <property type="taxonomic scope" value="Eukaryota"/>
</dbReference>
<dbReference type="InParanoid" id="P00008"/>
<dbReference type="Proteomes" id="UP000001811">
    <property type="component" value="Unplaced"/>
</dbReference>
<dbReference type="GO" id="GO:0005829">
    <property type="term" value="C:cytosol"/>
    <property type="evidence" value="ECO:0000250"/>
    <property type="project" value="UniProtKB"/>
</dbReference>
<dbReference type="GO" id="GO:0005758">
    <property type="term" value="C:mitochondrial intermembrane space"/>
    <property type="evidence" value="ECO:0007669"/>
    <property type="project" value="UniProtKB-SubCell"/>
</dbReference>
<dbReference type="GO" id="GO:0009055">
    <property type="term" value="F:electron transfer activity"/>
    <property type="evidence" value="ECO:0007669"/>
    <property type="project" value="InterPro"/>
</dbReference>
<dbReference type="GO" id="GO:0020037">
    <property type="term" value="F:heme binding"/>
    <property type="evidence" value="ECO:0007669"/>
    <property type="project" value="InterPro"/>
</dbReference>
<dbReference type="GO" id="GO:0046872">
    <property type="term" value="F:metal ion binding"/>
    <property type="evidence" value="ECO:0007669"/>
    <property type="project" value="UniProtKB-KW"/>
</dbReference>
<dbReference type="GO" id="GO:0006915">
    <property type="term" value="P:apoptotic process"/>
    <property type="evidence" value="ECO:0007669"/>
    <property type="project" value="UniProtKB-KW"/>
</dbReference>
<dbReference type="FunFam" id="1.10.760.10:FF:000008">
    <property type="entry name" value="Cytochrome c"/>
    <property type="match status" value="1"/>
</dbReference>
<dbReference type="Gene3D" id="1.10.760.10">
    <property type="entry name" value="Cytochrome c-like domain"/>
    <property type="match status" value="1"/>
</dbReference>
<dbReference type="InterPro" id="IPR009056">
    <property type="entry name" value="Cyt_c-like_dom"/>
</dbReference>
<dbReference type="InterPro" id="IPR036909">
    <property type="entry name" value="Cyt_c-like_dom_sf"/>
</dbReference>
<dbReference type="InterPro" id="IPR002327">
    <property type="entry name" value="Cyt_c_1A/1B"/>
</dbReference>
<dbReference type="PANTHER" id="PTHR11961">
    <property type="entry name" value="CYTOCHROME C"/>
    <property type="match status" value="1"/>
</dbReference>
<dbReference type="Pfam" id="PF00034">
    <property type="entry name" value="Cytochrom_C"/>
    <property type="match status" value="1"/>
</dbReference>
<dbReference type="PRINTS" id="PR00604">
    <property type="entry name" value="CYTCHRMECIAB"/>
</dbReference>
<dbReference type="SUPFAM" id="SSF46626">
    <property type="entry name" value="Cytochrome c"/>
    <property type="match status" value="1"/>
</dbReference>
<dbReference type="PROSITE" id="PS51007">
    <property type="entry name" value="CYTC"/>
    <property type="match status" value="1"/>
</dbReference>